<name>GNA15_HUMAN</name>
<keyword id="KW-0013">ADP-ribosylation</keyword>
<keyword id="KW-0342">GTP-binding</keyword>
<keyword id="KW-0460">Magnesium</keyword>
<keyword id="KW-0479">Metal-binding</keyword>
<keyword id="KW-0547">Nucleotide-binding</keyword>
<keyword id="KW-1267">Proteomics identification</keyword>
<keyword id="KW-1185">Reference proteome</keyword>
<keyword id="KW-0807">Transducer</keyword>
<proteinExistence type="evidence at protein level"/>
<evidence type="ECO:0000250" key="1"/>
<evidence type="ECO:0000255" key="2">
    <source>
        <dbReference type="PROSITE-ProRule" id="PRU01230"/>
    </source>
</evidence>
<evidence type="ECO:0000269" key="3">
    <source>
    </source>
</evidence>
<evidence type="ECO:0000269" key="4">
    <source>
    </source>
</evidence>
<evidence type="ECO:0000305" key="5"/>
<feature type="chain" id="PRO_0000203755" description="Guanine nucleotide-binding protein subunit alpha-15">
    <location>
        <begin position="1"/>
        <end position="374"/>
    </location>
</feature>
<feature type="domain" description="G-alpha" evidence="2">
    <location>
        <begin position="41"/>
        <end position="374"/>
    </location>
</feature>
<feature type="region of interest" description="G1 motif" evidence="2">
    <location>
        <begin position="44"/>
        <end position="57"/>
    </location>
</feature>
<feature type="region of interest" description="G2 motif" evidence="2">
    <location>
        <begin position="181"/>
        <end position="189"/>
    </location>
</feature>
<feature type="region of interest" description="G3 motif" evidence="2">
    <location>
        <begin position="204"/>
        <end position="213"/>
    </location>
</feature>
<feature type="region of interest" description="G4 motif" evidence="2">
    <location>
        <begin position="273"/>
        <end position="280"/>
    </location>
</feature>
<feature type="region of interest" description="G5 motif" evidence="2">
    <location>
        <begin position="344"/>
        <end position="349"/>
    </location>
</feature>
<feature type="binding site" evidence="1">
    <location>
        <begin position="49"/>
        <end position="56"/>
    </location>
    <ligand>
        <name>GTP</name>
        <dbReference type="ChEBI" id="CHEBI:37565"/>
    </ligand>
</feature>
<feature type="binding site" evidence="1">
    <location>
        <position position="56"/>
    </location>
    <ligand>
        <name>Mg(2+)</name>
        <dbReference type="ChEBI" id="CHEBI:18420"/>
    </ligand>
</feature>
<feature type="binding site" evidence="1">
    <location>
        <begin position="183"/>
        <end position="189"/>
    </location>
    <ligand>
        <name>GTP</name>
        <dbReference type="ChEBI" id="CHEBI:37565"/>
    </ligand>
</feature>
<feature type="binding site" evidence="1">
    <location>
        <position position="189"/>
    </location>
    <ligand>
        <name>Mg(2+)</name>
        <dbReference type="ChEBI" id="CHEBI:18420"/>
    </ligand>
</feature>
<feature type="binding site" evidence="1">
    <location>
        <begin position="208"/>
        <end position="212"/>
    </location>
    <ligand>
        <name>GTP</name>
        <dbReference type="ChEBI" id="CHEBI:37565"/>
    </ligand>
</feature>
<feature type="binding site" evidence="1">
    <location>
        <begin position="277"/>
        <end position="280"/>
    </location>
    <ligand>
        <name>GTP</name>
        <dbReference type="ChEBI" id="CHEBI:37565"/>
    </ligand>
</feature>
<feature type="binding site" evidence="1">
    <location>
        <position position="346"/>
    </location>
    <ligand>
        <name>GTP</name>
        <dbReference type="ChEBI" id="CHEBI:37565"/>
    </ligand>
</feature>
<feature type="modified residue" description="ADP-ribosylarginine; by cholera toxin" evidence="1">
    <location>
        <position position="186"/>
    </location>
</feature>
<feature type="sequence variant" id="VAR_028000" description="In dbSNP:rs310680." evidence="3">
    <original>C</original>
    <variation>Y</variation>
    <location>
        <position position="147"/>
    </location>
</feature>
<protein>
    <recommendedName>
        <fullName>Guanine nucleotide-binding protein subunit alpha-15</fullName>
        <shortName>G alpha-15</shortName>
        <shortName>G-protein subunit alpha-15</shortName>
    </recommendedName>
    <alternativeName>
        <fullName>Epididymis tissue protein Li 17E</fullName>
    </alternativeName>
    <alternativeName>
        <fullName>Guanine nucleotide-binding protein subunit alpha-16</fullName>
        <shortName>G alpha-16</shortName>
        <shortName>G-protein subunit alpha-16</shortName>
    </alternativeName>
</protein>
<organism>
    <name type="scientific">Homo sapiens</name>
    <name type="common">Human</name>
    <dbReference type="NCBI Taxonomy" id="9606"/>
    <lineage>
        <taxon>Eukaryota</taxon>
        <taxon>Metazoa</taxon>
        <taxon>Chordata</taxon>
        <taxon>Craniata</taxon>
        <taxon>Vertebrata</taxon>
        <taxon>Euteleostomi</taxon>
        <taxon>Mammalia</taxon>
        <taxon>Eutheria</taxon>
        <taxon>Euarchontoglires</taxon>
        <taxon>Primates</taxon>
        <taxon>Haplorrhini</taxon>
        <taxon>Catarrhini</taxon>
        <taxon>Hominidae</taxon>
        <taxon>Homo</taxon>
    </lineage>
</organism>
<reference key="1">
    <citation type="journal article" date="1991" name="Proc. Natl. Acad. Sci. U.S.A.">
        <title>G alpha 16, a G protein alpha subunit specifically expressed in hematopoietic cells.</title>
        <authorList>
            <person name="Amatruda T.T. III"/>
            <person name="Steele D.A."/>
            <person name="Slepak V.Z."/>
            <person name="Simon M.I."/>
        </authorList>
    </citation>
    <scope>NUCLEOTIDE SEQUENCE [MRNA]</scope>
</reference>
<reference key="2">
    <citation type="journal article" date="2010" name="Mol. Cell. Proteomics">
        <title>Systematic mapping and functional analysis of a family of human epididymal secretory sperm-located proteins.</title>
        <authorList>
            <person name="Li J."/>
            <person name="Liu F."/>
            <person name="Wang H."/>
            <person name="Liu X."/>
            <person name="Liu J."/>
            <person name="Li N."/>
            <person name="Wan F."/>
            <person name="Wang W."/>
            <person name="Zhang C."/>
            <person name="Jin S."/>
            <person name="Liu J."/>
            <person name="Zhu P."/>
            <person name="Liu Y."/>
        </authorList>
    </citation>
    <scope>NUCLEOTIDE SEQUENCE [MRNA]</scope>
    <scope>TISSUE SPECIFICITY</scope>
    <source>
        <tissue>Epididymis</tissue>
    </source>
</reference>
<reference key="3">
    <citation type="submission" date="2002-03" db="EMBL/GenBank/DDBJ databases">
        <title>cDNA clones of human proteins involved in signal transduction sequenced by the Guthrie cDNA resource center (www.cdna.org).</title>
        <authorList>
            <person name="Puhl H.L. III"/>
            <person name="Ikeda S.R."/>
            <person name="Aronstam R.S."/>
        </authorList>
    </citation>
    <scope>NUCLEOTIDE SEQUENCE [LARGE SCALE MRNA]</scope>
</reference>
<reference key="4">
    <citation type="submission" date="2003-08" db="EMBL/GenBank/DDBJ databases">
        <title>Cloning of human full-length CDSs in BD Creator(TM) system donor vector.</title>
        <authorList>
            <person name="Kalnine N."/>
            <person name="Chen X."/>
            <person name="Rolfs A."/>
            <person name="Halleck A."/>
            <person name="Hines L."/>
            <person name="Eisenstein S."/>
            <person name="Koundinya M."/>
            <person name="Raphael J."/>
            <person name="Moreira D."/>
            <person name="Kelley T."/>
            <person name="LaBaer J."/>
            <person name="Lin Y."/>
            <person name="Phelan M."/>
            <person name="Farmer A."/>
        </authorList>
    </citation>
    <scope>NUCLEOTIDE SEQUENCE [LARGE SCALE MRNA]</scope>
</reference>
<reference key="5">
    <citation type="journal article" date="2004" name="Nature">
        <title>The DNA sequence and biology of human chromosome 19.</title>
        <authorList>
            <person name="Grimwood J."/>
            <person name="Gordon L.A."/>
            <person name="Olsen A.S."/>
            <person name="Terry A."/>
            <person name="Schmutz J."/>
            <person name="Lamerdin J.E."/>
            <person name="Hellsten U."/>
            <person name="Goodstein D."/>
            <person name="Couronne O."/>
            <person name="Tran-Gyamfi M."/>
            <person name="Aerts A."/>
            <person name="Altherr M."/>
            <person name="Ashworth L."/>
            <person name="Bajorek E."/>
            <person name="Black S."/>
            <person name="Branscomb E."/>
            <person name="Caenepeel S."/>
            <person name="Carrano A.V."/>
            <person name="Caoile C."/>
            <person name="Chan Y.M."/>
            <person name="Christensen M."/>
            <person name="Cleland C.A."/>
            <person name="Copeland A."/>
            <person name="Dalin E."/>
            <person name="Dehal P."/>
            <person name="Denys M."/>
            <person name="Detter J.C."/>
            <person name="Escobar J."/>
            <person name="Flowers D."/>
            <person name="Fotopulos D."/>
            <person name="Garcia C."/>
            <person name="Georgescu A.M."/>
            <person name="Glavina T."/>
            <person name="Gomez M."/>
            <person name="Gonzales E."/>
            <person name="Groza M."/>
            <person name="Hammon N."/>
            <person name="Hawkins T."/>
            <person name="Haydu L."/>
            <person name="Ho I."/>
            <person name="Huang W."/>
            <person name="Israni S."/>
            <person name="Jett J."/>
            <person name="Kadner K."/>
            <person name="Kimball H."/>
            <person name="Kobayashi A."/>
            <person name="Larionov V."/>
            <person name="Leem S.-H."/>
            <person name="Lopez F."/>
            <person name="Lou Y."/>
            <person name="Lowry S."/>
            <person name="Malfatti S."/>
            <person name="Martinez D."/>
            <person name="McCready P.M."/>
            <person name="Medina C."/>
            <person name="Morgan J."/>
            <person name="Nelson K."/>
            <person name="Nolan M."/>
            <person name="Ovcharenko I."/>
            <person name="Pitluck S."/>
            <person name="Pollard M."/>
            <person name="Popkie A.P."/>
            <person name="Predki P."/>
            <person name="Quan G."/>
            <person name="Ramirez L."/>
            <person name="Rash S."/>
            <person name="Retterer J."/>
            <person name="Rodriguez A."/>
            <person name="Rogers S."/>
            <person name="Salamov A."/>
            <person name="Salazar A."/>
            <person name="She X."/>
            <person name="Smith D."/>
            <person name="Slezak T."/>
            <person name="Solovyev V."/>
            <person name="Thayer N."/>
            <person name="Tice H."/>
            <person name="Tsai M."/>
            <person name="Ustaszewska A."/>
            <person name="Vo N."/>
            <person name="Wagner M."/>
            <person name="Wheeler J."/>
            <person name="Wu K."/>
            <person name="Xie G."/>
            <person name="Yang J."/>
            <person name="Dubchak I."/>
            <person name="Furey T.S."/>
            <person name="DeJong P."/>
            <person name="Dickson M."/>
            <person name="Gordon D."/>
            <person name="Eichler E.E."/>
            <person name="Pennacchio L.A."/>
            <person name="Richardson P."/>
            <person name="Stubbs L."/>
            <person name="Rokhsar D.S."/>
            <person name="Myers R.M."/>
            <person name="Rubin E.M."/>
            <person name="Lucas S.M."/>
        </authorList>
    </citation>
    <scope>NUCLEOTIDE SEQUENCE [LARGE SCALE GENOMIC DNA]</scope>
    <scope>VARIANT TYR-147</scope>
</reference>
<reference key="6">
    <citation type="submission" date="2005-09" db="EMBL/GenBank/DDBJ databases">
        <authorList>
            <person name="Mural R.J."/>
            <person name="Istrail S."/>
            <person name="Sutton G.G."/>
            <person name="Florea L."/>
            <person name="Halpern A.L."/>
            <person name="Mobarry C.M."/>
            <person name="Lippert R."/>
            <person name="Walenz B."/>
            <person name="Shatkay H."/>
            <person name="Dew I."/>
            <person name="Miller J.R."/>
            <person name="Flanigan M.J."/>
            <person name="Edwards N.J."/>
            <person name="Bolanos R."/>
            <person name="Fasulo D."/>
            <person name="Halldorsson B.V."/>
            <person name="Hannenhalli S."/>
            <person name="Turner R."/>
            <person name="Yooseph S."/>
            <person name="Lu F."/>
            <person name="Nusskern D.R."/>
            <person name="Shue B.C."/>
            <person name="Zheng X.H."/>
            <person name="Zhong F."/>
            <person name="Delcher A.L."/>
            <person name="Huson D.H."/>
            <person name="Kravitz S.A."/>
            <person name="Mouchard L."/>
            <person name="Reinert K."/>
            <person name="Remington K.A."/>
            <person name="Clark A.G."/>
            <person name="Waterman M.S."/>
            <person name="Eichler E.E."/>
            <person name="Adams M.D."/>
            <person name="Hunkapiller M.W."/>
            <person name="Myers E.W."/>
            <person name="Venter J.C."/>
        </authorList>
    </citation>
    <scope>NUCLEOTIDE SEQUENCE [LARGE SCALE GENOMIC DNA]</scope>
</reference>
<reference key="7">
    <citation type="journal article" date="2004" name="Genome Res.">
        <title>The status, quality, and expansion of the NIH full-length cDNA project: the Mammalian Gene Collection (MGC).</title>
        <authorList>
            <consortium name="The MGC Project Team"/>
        </authorList>
    </citation>
    <scope>NUCLEOTIDE SEQUENCE [LARGE SCALE MRNA]</scope>
    <source>
        <tissue>Lung</tissue>
    </source>
</reference>
<reference key="8">
    <citation type="journal article" date="2014" name="J. Proteomics">
        <title>An enzyme assisted RP-RPLC approach for in-depth analysis of human liver phosphoproteome.</title>
        <authorList>
            <person name="Bian Y."/>
            <person name="Song C."/>
            <person name="Cheng K."/>
            <person name="Dong M."/>
            <person name="Wang F."/>
            <person name="Huang J."/>
            <person name="Sun D."/>
            <person name="Wang L."/>
            <person name="Ye M."/>
            <person name="Zou H."/>
        </authorList>
    </citation>
    <scope>IDENTIFICATION BY MASS SPECTROMETRY [LARGE SCALE ANALYSIS]</scope>
    <source>
        <tissue>Liver</tissue>
    </source>
</reference>
<reference key="9">
    <citation type="journal article" date="2015" name="Proteomics">
        <title>N-terminome analysis of the human mitochondrial proteome.</title>
        <authorList>
            <person name="Vaca Jacome A.S."/>
            <person name="Rabilloud T."/>
            <person name="Schaeffer-Reiss C."/>
            <person name="Rompais M."/>
            <person name="Ayoub D."/>
            <person name="Lane L."/>
            <person name="Bairoch A."/>
            <person name="Van Dorsselaer A."/>
            <person name="Carapito C."/>
        </authorList>
    </citation>
    <scope>IDENTIFICATION BY MASS SPECTROMETRY [LARGE SCALE ANALYSIS]</scope>
</reference>
<comment type="function">
    <text>Guanine nucleotide-binding proteins (G proteins) are involved as modulators or transducers in various transmembrane signaling systems.</text>
</comment>
<comment type="subunit">
    <text>G proteins are composed of 3 units; alpha, beta and gamma. The alpha chain contains the guanine nucleotide binding site.</text>
</comment>
<comment type="tissue specificity">
    <text evidence="4">Specifically expressed in hematopoietic cells. Expressed in epididymis (at protein level).</text>
</comment>
<comment type="similarity">
    <text evidence="5">Belongs to the G-alpha family. G(q) subfamily.</text>
</comment>
<gene>
    <name type="primary">GNA15</name>
    <name type="synonym">GNA16</name>
</gene>
<accession>P30679</accession>
<accession>E9KL40</accession>
<accession>E9KL47</accession>
<accession>O75247</accession>
<accession>Q53XK2</accession>
<dbReference type="EMBL" id="M63904">
    <property type="protein sequence ID" value="AAA35860.1"/>
    <property type="molecule type" value="mRNA"/>
</dbReference>
<dbReference type="EMBL" id="GU727637">
    <property type="protein sequence ID" value="ADU87639.1"/>
    <property type="molecule type" value="mRNA"/>
</dbReference>
<dbReference type="EMBL" id="GU727645">
    <property type="protein sequence ID" value="ADU87646.1"/>
    <property type="molecule type" value="mRNA"/>
</dbReference>
<dbReference type="EMBL" id="AF493904">
    <property type="protein sequence ID" value="AAM12618.1"/>
    <property type="molecule type" value="mRNA"/>
</dbReference>
<dbReference type="EMBL" id="BT009850">
    <property type="protein sequence ID" value="AAP88852.1"/>
    <property type="molecule type" value="mRNA"/>
</dbReference>
<dbReference type="EMBL" id="AC005264">
    <property type="protein sequence ID" value="AAC25612.1"/>
    <property type="molecule type" value="Genomic_DNA"/>
</dbReference>
<dbReference type="EMBL" id="AC005262">
    <property type="protein sequence ID" value="AAC25616.1"/>
    <property type="molecule type" value="Genomic_DNA"/>
</dbReference>
<dbReference type="EMBL" id="CH471139">
    <property type="protein sequence ID" value="EAW69338.1"/>
    <property type="molecule type" value="Genomic_DNA"/>
</dbReference>
<dbReference type="EMBL" id="BC013585">
    <property type="protein sequence ID" value="AAH13585.1"/>
    <property type="molecule type" value="mRNA"/>
</dbReference>
<dbReference type="CCDS" id="CCDS12104.1"/>
<dbReference type="PIR" id="A41096">
    <property type="entry name" value="A41096"/>
</dbReference>
<dbReference type="RefSeq" id="NP_002059.3">
    <property type="nucleotide sequence ID" value="NM_002068.4"/>
</dbReference>
<dbReference type="SMR" id="P30679"/>
<dbReference type="BioGRID" id="109031">
    <property type="interactions" value="12"/>
</dbReference>
<dbReference type="CORUM" id="P30679"/>
<dbReference type="FunCoup" id="P30679">
    <property type="interactions" value="460"/>
</dbReference>
<dbReference type="IntAct" id="P30679">
    <property type="interactions" value="16"/>
</dbReference>
<dbReference type="STRING" id="9606.ENSP00000262958"/>
<dbReference type="BindingDB" id="P30679"/>
<dbReference type="ChEMBL" id="CHEMBL5482994"/>
<dbReference type="iPTMnet" id="P30679"/>
<dbReference type="PhosphoSitePlus" id="P30679"/>
<dbReference type="SwissPalm" id="P30679"/>
<dbReference type="BioMuta" id="GNA15"/>
<dbReference type="DMDM" id="311033388"/>
<dbReference type="jPOST" id="P30679"/>
<dbReference type="MassIVE" id="P30679"/>
<dbReference type="PaxDb" id="9606-ENSP00000262958"/>
<dbReference type="PeptideAtlas" id="P30679"/>
<dbReference type="ProteomicsDB" id="54731"/>
<dbReference type="Pumba" id="P30679"/>
<dbReference type="Antibodypedia" id="23159">
    <property type="antibodies" value="265 antibodies from 30 providers"/>
</dbReference>
<dbReference type="DNASU" id="2769"/>
<dbReference type="Ensembl" id="ENST00000262958.4">
    <property type="protein sequence ID" value="ENSP00000262958.2"/>
    <property type="gene ID" value="ENSG00000060558.4"/>
</dbReference>
<dbReference type="GeneID" id="2769"/>
<dbReference type="KEGG" id="hsa:2769"/>
<dbReference type="MANE-Select" id="ENST00000262958.4">
    <property type="protein sequence ID" value="ENSP00000262958.2"/>
    <property type="RefSeq nucleotide sequence ID" value="NM_002068.4"/>
    <property type="RefSeq protein sequence ID" value="NP_002059.3"/>
</dbReference>
<dbReference type="UCSC" id="uc002lxf.3">
    <property type="organism name" value="human"/>
</dbReference>
<dbReference type="AGR" id="HGNC:4383"/>
<dbReference type="CTD" id="2769"/>
<dbReference type="DisGeNET" id="2769"/>
<dbReference type="GeneCards" id="GNA15"/>
<dbReference type="HGNC" id="HGNC:4383">
    <property type="gene designation" value="GNA15"/>
</dbReference>
<dbReference type="HPA" id="ENSG00000060558">
    <property type="expression patterns" value="Tissue enhanced (bone marrow, esophagus)"/>
</dbReference>
<dbReference type="MIM" id="139314">
    <property type="type" value="gene"/>
</dbReference>
<dbReference type="neXtProt" id="NX_P30679"/>
<dbReference type="OpenTargets" id="ENSG00000060558"/>
<dbReference type="PharmGKB" id="PA28768"/>
<dbReference type="VEuPathDB" id="HostDB:ENSG00000060558"/>
<dbReference type="eggNOG" id="KOG0085">
    <property type="taxonomic scope" value="Eukaryota"/>
</dbReference>
<dbReference type="GeneTree" id="ENSGT00940000161736"/>
<dbReference type="HOGENOM" id="CLU_014184_6_0_1"/>
<dbReference type="InParanoid" id="P30679"/>
<dbReference type="OMA" id="TTIHSAW"/>
<dbReference type="OrthoDB" id="5817230at2759"/>
<dbReference type="PAN-GO" id="P30679">
    <property type="GO annotations" value="7 GO annotations based on evolutionary models"/>
</dbReference>
<dbReference type="PhylomeDB" id="P30679"/>
<dbReference type="TreeFam" id="TF300673"/>
<dbReference type="BRENDA" id="3.6.5.1">
    <property type="organism ID" value="2681"/>
</dbReference>
<dbReference type="PathwayCommons" id="P30679"/>
<dbReference type="Reactome" id="R-HSA-112043">
    <property type="pathway name" value="PLC beta mediated events"/>
</dbReference>
<dbReference type="Reactome" id="R-HSA-202040">
    <property type="pathway name" value="G-protein activation"/>
</dbReference>
<dbReference type="Reactome" id="R-HSA-399997">
    <property type="pathway name" value="Acetylcholine regulates insulin secretion"/>
</dbReference>
<dbReference type="Reactome" id="R-HSA-416476">
    <property type="pathway name" value="G alpha (q) signalling events"/>
</dbReference>
<dbReference type="Reactome" id="R-HSA-418592">
    <property type="pathway name" value="ADP signalling through P2Y purinoceptor 1"/>
</dbReference>
<dbReference type="Reactome" id="R-HSA-428930">
    <property type="pathway name" value="Thromboxane signalling through TP receptor"/>
</dbReference>
<dbReference type="Reactome" id="R-HSA-434316">
    <property type="pathway name" value="Fatty Acids bound to GPR40 (FFAR1) regulate insulin secretion"/>
</dbReference>
<dbReference type="Reactome" id="R-HSA-456926">
    <property type="pathway name" value="Thrombin signalling through proteinase activated receptors (PARs)"/>
</dbReference>
<dbReference type="Reactome" id="R-HSA-6814122">
    <property type="pathway name" value="Cooperation of PDCL (PhLP1) and TRiC/CCT in G-protein beta folding"/>
</dbReference>
<dbReference type="SignaLink" id="P30679"/>
<dbReference type="SIGNOR" id="P30679"/>
<dbReference type="BioGRID-ORCS" id="2769">
    <property type="hits" value="11 hits in 1144 CRISPR screens"/>
</dbReference>
<dbReference type="ChiTaRS" id="GNA15">
    <property type="organism name" value="human"/>
</dbReference>
<dbReference type="GenomeRNAi" id="2769"/>
<dbReference type="Pharos" id="P30679">
    <property type="development level" value="Tbio"/>
</dbReference>
<dbReference type="PRO" id="PR:P30679"/>
<dbReference type="Proteomes" id="UP000005640">
    <property type="component" value="Chromosome 19"/>
</dbReference>
<dbReference type="RNAct" id="P30679">
    <property type="molecule type" value="protein"/>
</dbReference>
<dbReference type="Bgee" id="ENSG00000060558">
    <property type="expression patterns" value="Expressed in lower esophagus mucosa and 137 other cell types or tissues"/>
</dbReference>
<dbReference type="ExpressionAtlas" id="P30679">
    <property type="expression patterns" value="baseline and differential"/>
</dbReference>
<dbReference type="GO" id="GO:0005834">
    <property type="term" value="C:heterotrimeric G-protein complex"/>
    <property type="evidence" value="ECO:0000303"/>
    <property type="project" value="UniProtKB"/>
</dbReference>
<dbReference type="GO" id="GO:0005886">
    <property type="term" value="C:plasma membrane"/>
    <property type="evidence" value="ECO:0000304"/>
    <property type="project" value="Reactome"/>
</dbReference>
<dbReference type="GO" id="GO:0045202">
    <property type="term" value="C:synapse"/>
    <property type="evidence" value="ECO:0007669"/>
    <property type="project" value="GOC"/>
</dbReference>
<dbReference type="GO" id="GO:0001664">
    <property type="term" value="F:G protein-coupled receptor binding"/>
    <property type="evidence" value="ECO:0000314"/>
    <property type="project" value="UniProtKB"/>
</dbReference>
<dbReference type="GO" id="GO:0031683">
    <property type="term" value="F:G-protein beta/gamma-subunit complex binding"/>
    <property type="evidence" value="ECO:0007669"/>
    <property type="project" value="InterPro"/>
</dbReference>
<dbReference type="GO" id="GO:0005525">
    <property type="term" value="F:GTP binding"/>
    <property type="evidence" value="ECO:0000304"/>
    <property type="project" value="Reactome"/>
</dbReference>
<dbReference type="GO" id="GO:0003924">
    <property type="term" value="F:GTPase activity"/>
    <property type="evidence" value="ECO:0000304"/>
    <property type="project" value="Reactome"/>
</dbReference>
<dbReference type="GO" id="GO:0046872">
    <property type="term" value="F:metal ion binding"/>
    <property type="evidence" value="ECO:0007669"/>
    <property type="project" value="UniProtKB-KW"/>
</dbReference>
<dbReference type="GO" id="GO:0019722">
    <property type="term" value="P:calcium-mediated signaling"/>
    <property type="evidence" value="ECO:0000353"/>
    <property type="project" value="UniProtKB"/>
</dbReference>
<dbReference type="GO" id="GO:0007207">
    <property type="term" value="P:phospholipase C-activating G protein-coupled acetylcholine receptor signaling pathway"/>
    <property type="evidence" value="ECO:0000304"/>
    <property type="project" value="ProtInc"/>
</dbReference>
<dbReference type="CDD" id="cd00066">
    <property type="entry name" value="G-alpha"/>
    <property type="match status" value="1"/>
</dbReference>
<dbReference type="FunFam" id="1.10.400.10:FF:000002">
    <property type="entry name" value="guanine nucleotide-binding protein G(Q) subunit alpha"/>
    <property type="match status" value="1"/>
</dbReference>
<dbReference type="FunFam" id="3.40.50.300:FF:000692">
    <property type="entry name" value="Guanine nucleotide-binding protein subunit alpha"/>
    <property type="match status" value="1"/>
</dbReference>
<dbReference type="FunFam" id="3.40.50.300:FF:000985">
    <property type="entry name" value="Guanine nucleotide-binding protein subunit alpha-15"/>
    <property type="match status" value="1"/>
</dbReference>
<dbReference type="Gene3D" id="1.10.400.10">
    <property type="entry name" value="GI Alpha 1, domain 2-like"/>
    <property type="match status" value="1"/>
</dbReference>
<dbReference type="Gene3D" id="3.40.50.300">
    <property type="entry name" value="P-loop containing nucleotide triphosphate hydrolases"/>
    <property type="match status" value="1"/>
</dbReference>
<dbReference type="InterPro" id="IPR000654">
    <property type="entry name" value="Gprotein_alpha_Q"/>
</dbReference>
<dbReference type="InterPro" id="IPR001019">
    <property type="entry name" value="Gprotein_alpha_su"/>
</dbReference>
<dbReference type="InterPro" id="IPR011025">
    <property type="entry name" value="GproteinA_insert"/>
</dbReference>
<dbReference type="InterPro" id="IPR027417">
    <property type="entry name" value="P-loop_NTPase"/>
</dbReference>
<dbReference type="PANTHER" id="PTHR10218">
    <property type="entry name" value="GTP-BINDING PROTEIN ALPHA SUBUNIT"/>
    <property type="match status" value="1"/>
</dbReference>
<dbReference type="PANTHER" id="PTHR10218:SF217">
    <property type="entry name" value="GUANINE NUCLEOTIDE-BINDING PROTEIN SUBUNIT ALPHA-15"/>
    <property type="match status" value="1"/>
</dbReference>
<dbReference type="Pfam" id="PF00503">
    <property type="entry name" value="G-alpha"/>
    <property type="match status" value="1"/>
</dbReference>
<dbReference type="PRINTS" id="PR00318">
    <property type="entry name" value="GPROTEINA"/>
</dbReference>
<dbReference type="PRINTS" id="PR00442">
    <property type="entry name" value="GPROTEINAQ"/>
</dbReference>
<dbReference type="SMART" id="SM00275">
    <property type="entry name" value="G_alpha"/>
    <property type="match status" value="1"/>
</dbReference>
<dbReference type="SUPFAM" id="SSF52540">
    <property type="entry name" value="P-loop containing nucleoside triphosphate hydrolases"/>
    <property type="match status" value="1"/>
</dbReference>
<dbReference type="SUPFAM" id="SSF47895">
    <property type="entry name" value="Transducin (alpha subunit), insertion domain"/>
    <property type="match status" value="1"/>
</dbReference>
<dbReference type="PROSITE" id="PS51882">
    <property type="entry name" value="G_ALPHA"/>
    <property type="match status" value="1"/>
</dbReference>
<sequence>MARSLTWRCCPWCLTEDEKAAARVDQEINRILLEQKKQDRGELKLLLLGPGESGKSTFIKQMRIIHGAGYSEEERKGFRPLVYQNIFVSMRAMIEAMERLQIPFSRPESKHHASLVMSQDPYKVTTFEKRYAAAMQWLWRDAGIRACYERRREFHLLDSAVYYLSHLERITEEGYVPTAQDVLRSRMPTTGINEYCFSVQKTNLRIVDVGGQKSERKKWIHCFENVIALIYLASLSEYDQCLEENNQENRMKESLALFGTILELPWFKSTSVILFLNKTDILEEKIPTSHLATYFPSFQGPKQDAEAAKRFILDMYTRMYTGCVDGPEGSKKGARSRRLFSHYTCATDTQNIRKVFKDVRDSVLARYLDEINLL</sequence>